<organism>
    <name type="scientific">Caenorhabditis elegans</name>
    <dbReference type="NCBI Taxonomy" id="6239"/>
    <lineage>
        <taxon>Eukaryota</taxon>
        <taxon>Metazoa</taxon>
        <taxon>Ecdysozoa</taxon>
        <taxon>Nematoda</taxon>
        <taxon>Chromadorea</taxon>
        <taxon>Rhabditida</taxon>
        <taxon>Rhabditina</taxon>
        <taxon>Rhabditomorpha</taxon>
        <taxon>Rhabditoidea</taxon>
        <taxon>Rhabditidae</taxon>
        <taxon>Peloderinae</taxon>
        <taxon>Caenorhabditis</taxon>
    </lineage>
</organism>
<comment type="function">
    <text evidence="7 8 9 10 11 12 13 15 16 17 18 19 20 22 24">Essential signaling protein which has a major role in germline and embryonic development; involved in cell fate decisions that require cell-cell interactions (PubMed:16319922, PubMed:19379690, PubMed:8156602). Probable membrane-bound receptor for putative ligands lag-2 and apx-1 (PubMed:7607081, PubMed:8156602). Upon ligand activation, and releasing from the cell membrane, the glp-1/Notch intracellular domain (NICD) probably forms a transcriptional activator complex with lag-1 and lag-3 and regulates expression of various genes; targets in the germline include lst-1 and sygl-1 (PubMed:10884418, PubMed:16197940, PubMed:16319922, PubMed:19379690, PubMed:32196486, PubMed:7566091, PubMed:9003776). Involved in the specification of the cell fates of the blastomeres, ABa and ABp (PubMed:8156602). Proper signaling by glp-1 induces ABa descendants to produce anterior pharyngeal cells, and ABp descendants to adopt a different fate (PubMed:8156602). Contributes to the establishment of the dorsal-ventral axis in early embryos (PubMed:8156602). Required in postmitotic neurons in order to maintain the developmentally arrested larval state known as dauer, probably in response to lag-2 (PubMed:18599512). Regulates germ cell mitotic proliferation probably by regulating MAP kinase phosphatase lip-1 expression (PubMed:16319922, PubMed:22278922). Required for oocyte growth control (PubMed:19502484). Plays a negative role in lifespan (PubMed:21906946, PubMed:24332851, PubMed:28853436).</text>
</comment>
<comment type="subunit">
    <text evidence="23">Interacts with sel-10.</text>
</comment>
<comment type="subunit">
    <molecule>glp-1/Notch intracellular domain</molecule>
    <text evidence="22 24">When activated, the glp-1/Notch intracellular domain (NICD) may become a component of a complex consisting of at least the NICD, lag-1 and lag-3.</text>
</comment>
<comment type="subcellular location">
    <subcellularLocation>
        <location evidence="19">Cell membrane</location>
        <topology evidence="2">Single-pass type I membrane protein</topology>
    </subcellularLocation>
    <subcellularLocation>
        <location evidence="10">Cell projection</location>
        <location evidence="10">Axon</location>
    </subcellularLocation>
    <text evidence="10">Localized to axons during dauer larval stage.</text>
</comment>
<comment type="subcellular location">
    <molecule>glp-1/Notch intracellular domain</molecule>
    <subcellularLocation>
        <location evidence="22">Nucleus</location>
    </subcellularLocation>
    <text evidence="22">The glp-1/Notch intracellular domain (NICD) may become localized to the nucleus after ligand activation.</text>
</comment>
<comment type="tissue specificity">
    <text evidence="19">Expressed in the distal mitotic region of the germ line (PubMed:7607081). May be absent from the gonadal distal tip cell (DTC) (PubMed:7607081).</text>
</comment>
<comment type="developmental stage">
    <text evidence="10 20">Acts on ABp development during 4-cell and 12-cell stages, and on ABa development during 12-cell and 28-cell stages (PubMed:8156602). Expressed in various neurons, including AWC, during the dauer larval stage (PubMed:18599512).</text>
</comment>
<comment type="PTM">
    <text evidence="1 8 18">Upon binding its ligands, it is cleaved (S2 cleavage) in its extracellular domain, close to the transmembrane domain (By similarity). S2 cleavage is probably mediated by the metalloproteases adm-4 and sup-17 (PubMed:16197940). It is then cleaved (S3 cleavage) downstream of its transmembrane domain, releasing it from the cell membrane; S3 cleavage requires a multiprotein gamma-secretase complex, which may include presenilin sel-12 (PubMed:7566091).</text>
</comment>
<comment type="disruption phenotype">
    <text evidence="11 13 15">RNAi-mediated knockdown causes an increase in lifespan and a moderate increase in aak-2 phosphorylation (PubMed:24332851). RNAi-mediated knockdown in a rsks-1 mutant background reduces the formation of proximal germ cell tumors (PubMed:22278922). RNAi-mediated knockdown results in abnormally large oocytes (PubMed:19502484).</text>
</comment>
<accession>P13508</accession>
<feature type="signal peptide" evidence="2">
    <location>
        <begin position="1"/>
        <end position="15"/>
    </location>
</feature>
<feature type="chain" id="PRO_0000007594" description="Protein glp-1">
    <location>
        <begin position="16"/>
        <end position="1295"/>
    </location>
</feature>
<feature type="chain" id="PRO_0000453170" description="glp-1/Notch intracellular domain" evidence="25">
    <location>
        <begin status="unknown"/>
        <end position="1295"/>
    </location>
</feature>
<feature type="topological domain" description="Extracellular" evidence="2">
    <location>
        <begin position="16"/>
        <end position="764"/>
    </location>
</feature>
<feature type="transmembrane region" description="Helical" evidence="2">
    <location>
        <begin position="765"/>
        <end position="786"/>
    </location>
</feature>
<feature type="topological domain" description="Cytoplasmic" evidence="2">
    <location>
        <begin position="787"/>
        <end position="1295"/>
    </location>
</feature>
<feature type="domain" description="EGF-like 1" evidence="4">
    <location>
        <begin position="19"/>
        <end position="58"/>
    </location>
</feature>
<feature type="domain" description="EGF-like 2" evidence="4">
    <location>
        <begin position="117"/>
        <end position="152"/>
    </location>
</feature>
<feature type="domain" description="EGF-like 3" evidence="4">
    <location>
        <begin position="154"/>
        <end position="190"/>
    </location>
</feature>
<feature type="domain" description="EGF-like 4" evidence="4">
    <location>
        <begin position="190"/>
        <end position="230"/>
    </location>
</feature>
<feature type="domain" description="EGF-like 5; calcium-binding" evidence="4">
    <location>
        <begin position="232"/>
        <end position="269"/>
    </location>
</feature>
<feature type="domain" description="EGF-like 6" evidence="4">
    <location>
        <begin position="271"/>
        <end position="308"/>
    </location>
</feature>
<feature type="domain" description="EGF-like 7" evidence="4">
    <location>
        <begin position="316"/>
        <end position="359"/>
    </location>
</feature>
<feature type="domain" description="EGF-like 8" evidence="4">
    <location>
        <begin position="369"/>
        <end position="406"/>
    </location>
</feature>
<feature type="domain" description="EGF-like 9" evidence="4">
    <location>
        <begin position="407"/>
        <end position="443"/>
    </location>
</feature>
<feature type="domain" description="EGF-like 10" evidence="4">
    <location>
        <begin position="446"/>
        <end position="479"/>
    </location>
</feature>
<feature type="repeat" description="LNR 1" evidence="5 21">
    <location>
        <begin position="496"/>
        <end position="532"/>
    </location>
</feature>
<feature type="repeat" description="LNR 2" evidence="5 21">
    <location>
        <begin position="536"/>
        <end position="577"/>
    </location>
</feature>
<feature type="repeat" description="LNR 3" evidence="5 21">
    <location>
        <begin position="581"/>
        <end position="612"/>
    </location>
</feature>
<feature type="repeat" description="ANK 1" evidence="3 21">
    <location>
        <begin position="961"/>
        <end position="990"/>
    </location>
</feature>
<feature type="repeat" description="ANK 2" evidence="3 21">
    <location>
        <begin position="994"/>
        <end position="1023"/>
    </location>
</feature>
<feature type="repeat" description="ANK 3" evidence="3 21">
    <location>
        <begin position="1030"/>
        <end position="1062"/>
    </location>
</feature>
<feature type="repeat" description="ANK 4" evidence="3 21">
    <location>
        <begin position="1074"/>
        <end position="1103"/>
    </location>
</feature>
<feature type="repeat" description="ANK 5" evidence="3 21">
    <location>
        <begin position="1107"/>
        <end position="1136"/>
    </location>
</feature>
<feature type="region of interest" description="Disordered" evidence="6">
    <location>
        <begin position="1177"/>
        <end position="1244"/>
    </location>
</feature>
<feature type="compositionally biased region" description="Polar residues" evidence="6">
    <location>
        <begin position="1201"/>
        <end position="1210"/>
    </location>
</feature>
<feature type="compositionally biased region" description="Low complexity" evidence="6">
    <location>
        <begin position="1221"/>
        <end position="1239"/>
    </location>
</feature>
<feature type="glycosylation site" description="N-linked (GlcNAc...) asparagine" evidence="2">
    <location>
        <position position="244"/>
    </location>
</feature>
<feature type="glycosylation site" description="N-linked (GlcNAc...) asparagine" evidence="2">
    <location>
        <position position="245"/>
    </location>
</feature>
<feature type="glycosylation site" description="N-linked (GlcNAc...) asparagine" evidence="2">
    <location>
        <position position="333"/>
    </location>
</feature>
<feature type="glycosylation site" description="N-linked (GlcNAc...) asparagine" evidence="2">
    <location>
        <position position="381"/>
    </location>
</feature>
<feature type="glycosylation site" description="N-linked (GlcNAc...) asparagine" evidence="2">
    <location>
        <position position="609"/>
    </location>
</feature>
<feature type="glycosylation site" description="N-linked (GlcNAc...) asparagine" evidence="2">
    <location>
        <position position="675"/>
    </location>
</feature>
<feature type="disulfide bond" evidence="4">
    <location>
        <begin position="23"/>
        <end position="35"/>
    </location>
</feature>
<feature type="disulfide bond" evidence="4">
    <location>
        <begin position="29"/>
        <end position="46"/>
    </location>
</feature>
<feature type="disulfide bond" evidence="4">
    <location>
        <begin position="48"/>
        <end position="57"/>
    </location>
</feature>
<feature type="disulfide bond" evidence="4">
    <location>
        <begin position="121"/>
        <end position="131"/>
    </location>
</feature>
<feature type="disulfide bond" evidence="4">
    <location>
        <begin position="126"/>
        <end position="140"/>
    </location>
</feature>
<feature type="disulfide bond" evidence="4">
    <location>
        <begin position="142"/>
        <end position="151"/>
    </location>
</feature>
<feature type="disulfide bond" evidence="4">
    <location>
        <begin position="158"/>
        <end position="169"/>
    </location>
</feature>
<feature type="disulfide bond" evidence="4">
    <location>
        <begin position="163"/>
        <end position="178"/>
    </location>
</feature>
<feature type="disulfide bond" evidence="4">
    <location>
        <begin position="180"/>
        <end position="189"/>
    </location>
</feature>
<feature type="disulfide bond" evidence="4">
    <location>
        <begin position="201"/>
        <end position="206"/>
    </location>
</feature>
<feature type="disulfide bond" evidence="4">
    <location>
        <begin position="220"/>
        <end position="229"/>
    </location>
</feature>
<feature type="disulfide bond" evidence="4">
    <location>
        <begin position="236"/>
        <end position="248"/>
    </location>
</feature>
<feature type="disulfide bond" evidence="4">
    <location>
        <begin position="242"/>
        <end position="257"/>
    </location>
</feature>
<feature type="disulfide bond" evidence="4">
    <location>
        <begin position="259"/>
        <end position="268"/>
    </location>
</feature>
<feature type="disulfide bond" evidence="4">
    <location>
        <begin position="275"/>
        <end position="286"/>
    </location>
</feature>
<feature type="disulfide bond" evidence="4">
    <location>
        <begin position="280"/>
        <end position="296"/>
    </location>
</feature>
<feature type="disulfide bond" evidence="4">
    <location>
        <begin position="298"/>
        <end position="307"/>
    </location>
</feature>
<feature type="disulfide bond" evidence="4">
    <location>
        <begin position="329"/>
        <end position="342"/>
    </location>
</feature>
<feature type="disulfide bond" evidence="4">
    <location>
        <begin position="336"/>
        <end position="347"/>
    </location>
</feature>
<feature type="disulfide bond" evidence="4">
    <location>
        <begin position="349"/>
        <end position="358"/>
    </location>
</feature>
<feature type="disulfide bond" evidence="4">
    <location>
        <begin position="373"/>
        <end position="384"/>
    </location>
</feature>
<feature type="disulfide bond" evidence="4">
    <location>
        <begin position="378"/>
        <end position="394"/>
    </location>
</feature>
<feature type="disulfide bond" evidence="4">
    <location>
        <begin position="396"/>
        <end position="405"/>
    </location>
</feature>
<feature type="disulfide bond" evidence="4">
    <location>
        <begin position="411"/>
        <end position="422"/>
    </location>
</feature>
<feature type="disulfide bond" evidence="4">
    <location>
        <begin position="416"/>
        <end position="431"/>
    </location>
</feature>
<feature type="disulfide bond" evidence="4">
    <location>
        <begin position="433"/>
        <end position="442"/>
    </location>
</feature>
<feature type="disulfide bond" evidence="4">
    <location>
        <begin position="450"/>
        <end position="461"/>
    </location>
</feature>
<feature type="disulfide bond" evidence="4">
    <location>
        <begin position="455"/>
        <end position="467"/>
    </location>
</feature>
<feature type="disulfide bond" evidence="4">
    <location>
        <begin position="469"/>
        <end position="478"/>
    </location>
</feature>
<feature type="disulfide bond" evidence="5">
    <location>
        <begin position="496"/>
        <end position="519"/>
    </location>
</feature>
<feature type="disulfide bond" evidence="5">
    <location>
        <begin position="501"/>
        <end position="514"/>
    </location>
</feature>
<feature type="disulfide bond" evidence="5">
    <location>
        <begin position="510"/>
        <end position="526"/>
    </location>
</feature>
<feature type="disulfide bond" evidence="5">
    <location>
        <begin position="536"/>
        <end position="560"/>
    </location>
</feature>
<feature type="disulfide bond" evidence="5">
    <location>
        <begin position="542"/>
        <end position="555"/>
    </location>
</feature>
<feature type="disulfide bond" evidence="5">
    <location>
        <begin position="551"/>
        <end position="567"/>
    </location>
</feature>
<feature type="disulfide bond" evidence="5">
    <location>
        <begin position="582"/>
        <end position="595"/>
    </location>
</feature>
<feature type="disulfide bond" evidence="5">
    <location>
        <begin position="591"/>
        <end position="607"/>
    </location>
</feature>
<feature type="mutagenesis site" description="In ar202; formation of proximal germ cell-derived tumors." evidence="13">
    <original>G</original>
    <variation>E</variation>
    <location>
        <position position="529"/>
    </location>
</feature>
<feature type="mutagenesis site" description="In 2144; moderate increase in aak-2 phosphorylation." evidence="15">
    <original>L</original>
    <variation>F</variation>
    <location>
        <position position="929"/>
    </location>
</feature>
<feature type="mutagenesis site" description="In 2141; reduces number of germline progenitors at the semi-permissive temperature (20 degrees Celsius). All germ cells differentiate at the restrictive temperature (25 degrees Celsius). Defects in maintenance of the developmentally arrested larval state known as dauer, in response to pheromone; similar phenotype in absence of pheromone, when on a daf-7 mutant background. Increases longevity and reduces nucleoli size (20 degrees Celsius). Increased longevity and reduced nucleoli size phenotypes are suppressed in an ncl-1 mutant background (20 degrees Celsius). Autophagy levels are increased due the up-regulation of transcription factor pha-4 and its autophagy-related target genes. Increases lipase activity. The increase in autophagy and lipase activity is partially suppressed in a lipl-4 RNAi-mediated background." evidence="10 12 13 16">
    <original>R</original>
    <variation>C</variation>
    <location>
        <position position="974"/>
    </location>
</feature>
<feature type="mutagenesis site" description="In tn777; abnormally large oocytes." evidence="11">
    <original>A</original>
    <variation>T</variation>
    <location>
        <position position="1034"/>
    </location>
</feature>
<feature type="mutagenesis site" description="In q224; at the restrictive temperature of 25 degrees Celsius, loss of interaction of lag-3 with lip-1 promoter. Loss of mpk-1 isoform b expression probably due to a lack of germline." evidence="9 14">
    <original>G</original>
    <variation>E</variation>
    <location>
        <position position="1043"/>
    </location>
</feature>
<sequence length="1295" mass="144079">MRVLLILLAFFAPIASQLMGGECGREGACSVNGKCYNGKLIETYWCRCKKGFGGAFCERECDLDCKRGEKCIYDVYGENPTCICQDCEDETPPTERTQKGCEEGYGGPDCKTPLFSGVNPCDSDPCNNGLCYPFYGGFQCICNNGYGGSYCEEGIDHCAQNECAEGSTCVNSVYNYYCDCPIGKSGRYCERTECALMGNICNHGRCIPNRDEDKNFRCVCDSGYEGEFCNKDKNECLIEETCVNNSTCFNLHGDFTCTCKPGYAGKYCEEAIDMCKDYVCQNDGYCAHDSNQMPICYCEQGFTGQRCEIECPSGFGGIHCDLPLQRPHCSRSNGTCYNDGRCINGFCVCEPDYIGDRCEINRKDFKFPDIQSCKYNPCVNNATCIDLKNSGYSCHCPLGFYGLNCEQHLLCTPTTCANGGTCEGVNGVIRCNCPNGFSGDYCEIKDRQLCSRHPCKNGGVCKNTGYCECQYGYTGPTCEEVLVIEKSKETVIRDLCEQRKCMDLASNGICNPECNLEECNFDGGDCSGGQRPFSKCQYPARCADQFANGVCNQECNNEECLYDGLDCQSELFRCPAHIRKHCIERRGDGVCNLECSFIGCGFDGGDCNNGTEAIILSDIRIKVQIDPIEFQATGGETLMQISANLRATVRIQRDELGPLVFRWDGEHEMERVEMNSSKLEDQFVLSHHVRRYRQAVVTGIVLYLEVEEICKPEFCRFSTAQSVVDLIAAGLVKSDGRMSLGLPITEAMVAVPKRNEIDEGWSRSQVILFACIAFLAFGTVVAGVIAKNGPERSRKRKMVNATVWMPPMESTNEKGRRNQSNHSSQCSLLDNSAYYHPNTKRHCSDYSTGYNGEQYSQIYPQTLANGYPGDYNELNFDFQSETFAPADLPADEIPLHVQAAGPDAITAPITNESVNQVDSKYRRRVLHWLAANVRGKPEDVITTEAIRCLKAGADVNARDCDENTALMLAVRAHRVRLSVVLLREGANPTIFNNSERSALHEAVVNKDLRILRHLLTDKRLLKEIDELDRNGMTALMLVARELGKHQVEMAELLLSKGAKLDYDGAARKDSNKYKGRTALHYAAMHDNEEMVIMLVRRSSNKDKQDEDGRTPIMLAAKEGCEKTVQYLALNDASLGIVDSMDMTAAQVAEASYHHELAAFLRQVANERHRNDIMRQQIVKSGHGAKSGRQTVKNIKRAGSRKTPTSAASSRETNHLTPPPSDGSFSSPSPHYYPTTTSTPNRMETSPEYMFNHEMAPPVNAMWYTTPPPYQDPNYRHVPPNTAFQNAEQMNGSFYC</sequence>
<name>GLP1_CAEEL</name>
<gene>
    <name evidence="27" type="primary">glp-1</name>
    <name evidence="27" type="synonym">emb-33</name>
    <name evidence="27" type="ORF">F02A9.6</name>
</gene>
<reference key="1">
    <citation type="journal article" date="1989" name="Cell">
        <title>glp-1 and lin-12, genes implicated in distinct cell-cell interactions in C. elegans, encode similar transmembrane proteins.</title>
        <authorList>
            <person name="Yochem J."/>
            <person name="Greenwald I."/>
        </authorList>
    </citation>
    <scope>NUCLEOTIDE SEQUENCE [GENOMIC DNA]</scope>
    <source>
        <strain>Bristol N2</strain>
    </source>
</reference>
<reference key="2">
    <citation type="journal article" date="1994" name="Nature">
        <title>2.2 Mb of contiguous nucleotide sequence from chromosome III of C. elegans.</title>
        <authorList>
            <person name="Wilson R."/>
            <person name="Ainscough R."/>
            <person name="Anderson K."/>
            <person name="Baynes C."/>
            <person name="Berks M."/>
            <person name="Bonfield J."/>
            <person name="Burton J."/>
            <person name="Connell M."/>
            <person name="Copsey T."/>
            <person name="Cooper J."/>
            <person name="Coulson A."/>
            <person name="Craxton M."/>
            <person name="Dear S."/>
            <person name="Du Z."/>
            <person name="Durbin R."/>
            <person name="Favello A."/>
            <person name="Fraser A."/>
            <person name="Fulton L."/>
            <person name="Gardner A."/>
            <person name="Green P."/>
            <person name="Hawkins T."/>
            <person name="Hillier L."/>
            <person name="Jier M."/>
            <person name="Johnston L."/>
            <person name="Jones M."/>
            <person name="Kershaw J."/>
            <person name="Kirsten J."/>
            <person name="Laisster N."/>
            <person name="Latreille P."/>
            <person name="Lightning J."/>
            <person name="Lloyd C."/>
            <person name="Mortimore B."/>
            <person name="O'Callaghan M."/>
            <person name="Parsons J."/>
            <person name="Percy C."/>
            <person name="Rifken L."/>
            <person name="Roopra A."/>
            <person name="Saunders D."/>
            <person name="Shownkeen R."/>
            <person name="Sims M."/>
            <person name="Smaldon N."/>
            <person name="Smith A."/>
            <person name="Smith M."/>
            <person name="Sonnhammer E."/>
            <person name="Staden R."/>
            <person name="Sulston J."/>
            <person name="Thierry-Mieg J."/>
            <person name="Thomas K."/>
            <person name="Vaudin M."/>
            <person name="Vaughan K."/>
            <person name="Waterston R."/>
            <person name="Watson A."/>
            <person name="Weinstock L."/>
            <person name="Wilkinson-Sproat J."/>
            <person name="Wohldman P."/>
        </authorList>
    </citation>
    <scope>NUCLEOTIDE SEQUENCE [LARGE SCALE GENOMIC DNA]</scope>
    <source>
        <strain>Bristol N2</strain>
    </source>
</reference>
<reference key="3">
    <citation type="journal article" date="1998" name="Science">
        <title>Genome sequence of the nematode C. elegans: a platform for investigating biology.</title>
        <authorList>
            <consortium name="The C. elegans sequencing consortium"/>
        </authorList>
    </citation>
    <scope>NUCLEOTIDE SEQUENCE [LARGE SCALE GENOMIC DNA]</scope>
    <source>
        <strain>Bristol N2</strain>
    </source>
</reference>
<reference key="4">
    <citation type="journal article" date="1991" name="Nature">
        <title>Carboxy-terminal truncation activates glp-1 protein to specify vulval fates in Caenorhabditis elegans.</title>
        <authorList>
            <person name="Mango S.E."/>
            <person name="Maine E.M."/>
            <person name="Kimble J."/>
        </authorList>
    </citation>
    <scope>DELETION OF 1174-1295</scope>
</reference>
<reference key="5">
    <citation type="journal article" date="1993" name="Nature">
        <title>Control of cell fate in C. elegans by a GLP-1 peptide consisting primarily of ankyrin repeats.</title>
        <authorList>
            <person name="Roehl H."/>
            <person name="Kimble J."/>
        </authorList>
    </citation>
    <scope>CHARACTERIZATION OF FUNCTION OF THE ANKYRIN REPEATS</scope>
</reference>
<reference key="6">
    <citation type="journal article" date="1994" name="Cell">
        <title>The maternal genes apx-1 and glp-1 and establishment of dorsal-ventral polarity in the early C. elegans embryo.</title>
        <authorList>
            <person name="Mello C.C."/>
            <person name="Draper B.W."/>
            <person name="Priess J.R."/>
        </authorList>
    </citation>
    <scope>FUNCTION</scope>
</reference>
<reference key="7">
    <citation type="journal article" date="1994" name="Development">
        <title>lag-2 may encode a signaling ligand for the GLP-1 and LIN-12 receptors of C. elegans.</title>
        <authorList>
            <person name="Henderson S.T."/>
            <person name="Gao D."/>
            <person name="Lambie E.J."/>
            <person name="Kimble J."/>
        </authorList>
    </citation>
    <scope>FUNCTION</scope>
    <scope>SUBCELLULAR LOCATION</scope>
    <scope>TISSUE SPECIFICITY</scope>
</reference>
<reference key="8">
    <citation type="journal article" date="1995" name="Nature">
        <title>Facilitation of lin-12-mediated signalling by sel-12, a Caenorhabditis elegans S182 Alzheimer's disease gene.</title>
        <authorList>
            <person name="Levitan D."/>
            <person name="Greenwald I."/>
        </authorList>
    </citation>
    <scope>FUNCTION</scope>
    <scope>PROTEOLYTIC PROCESSING</scope>
</reference>
<reference key="9">
    <citation type="journal article" date="1996" name="EMBO J.">
        <title>Roles of the RAM and ANK domains in signaling by the C. elegans GLP-1 receptor.</title>
        <authorList>
            <person name="Roehl H."/>
            <person name="Bosenberg M."/>
            <person name="Blelloch R."/>
            <person name="Kimble J."/>
        </authorList>
    </citation>
    <scope>FUNCTION</scope>
    <scope>INTERACTION WITH LAG-1</scope>
    <scope>SUBCELLULAR LOCATION</scope>
</reference>
<reference key="10">
    <citation type="journal article" date="1998" name="Proc. Natl. Acad. Sci. U.S.A.">
        <title>Evidence for functional and physical association between Caenorhabditis elegans SEL-10, a Cdc4p-related protein, and SEL-12 presenilin.</title>
        <authorList>
            <person name="Wu G."/>
            <person name="Hubbard E.J.A."/>
            <person name="Kitajewski J.K."/>
            <person name="Greenwald I."/>
        </authorList>
    </citation>
    <scope>INTERACTION WITH SEL-10</scope>
</reference>
<reference key="11">
    <citation type="journal article" date="2000" name="Proc. Natl. Acad. Sci. U.S.A.">
        <title>SEL-8, a nuclear protein required for LIN-12 and GLP-1 signaling in Caenorhabditis elegans.</title>
        <authorList>
            <person name="Doyle T.G."/>
            <person name="Wen C."/>
            <person name="Greenwald I."/>
        </authorList>
    </citation>
    <scope>FUNCTION</scope>
</reference>
<reference key="12">
    <citation type="journal article" date="2005" name="Dev. Biol.">
        <title>Evidence for functional redundancy between C. elegans ADAM proteins SUP-17/Kuzbanian and ADM-4/TACE.</title>
        <authorList>
            <person name="Jarriault S."/>
            <person name="Greenwald I."/>
        </authorList>
    </citation>
    <scope>FUNCTION</scope>
    <scope>PROTEOLYTIC PROCESSING</scope>
</reference>
<reference key="13">
    <citation type="journal article" date="2006" name="EMBO J.">
        <title>LIP-1 phosphatase controls the extent of germline proliferation in Caenorhabditis elegans.</title>
        <authorList>
            <person name="Lee M.H."/>
            <person name="Hook B."/>
            <person name="Lamont L.B."/>
            <person name="Wickens M."/>
            <person name="Kimble J."/>
        </authorList>
    </citation>
    <scope>FUNCTION</scope>
    <scope>MUTAGENESIS OF GLY-1043</scope>
</reference>
<reference key="14">
    <citation type="journal article" date="2008" name="Development">
        <title>Notch signalling is required for both dauer maintenance and recovery in C. elegans.</title>
        <authorList>
            <person name="Ouellet J."/>
            <person name="Li S."/>
            <person name="Roy R."/>
        </authorList>
    </citation>
    <scope>FUNCTION</scope>
    <scope>SUBCELLULAR LOCATION</scope>
    <scope>DEVELOPMENTAL STAGE</scope>
    <scope>MUTAGENESIS OF ARG-974</scope>
</reference>
<reference key="15">
    <citation type="journal article" date="2009" name="Cell">
        <title>The canonical Notch signaling pathway: unfolding the activation mechanism.</title>
        <authorList>
            <person name="Kopan R."/>
            <person name="Ilagan M.X."/>
        </authorList>
    </citation>
    <scope>REVIEW OF FUNCTION</scope>
</reference>
<reference key="16">
    <citation type="journal article" date="2009" name="Development">
        <title>MSP and GLP-1/Notch signaling coordinately regulate actomyosin-dependent cytoplasmic streaming and oocyte growth in C. elegans.</title>
        <authorList>
            <person name="Nadarajan S."/>
            <person name="Govindan J.A."/>
            <person name="McGovern M."/>
            <person name="Hubbard E.J."/>
            <person name="Greenstein D."/>
        </authorList>
    </citation>
    <scope>FUNCTION</scope>
    <scope>DISRUPTION PHENOTYPE</scope>
    <scope>MUTAGENESIS OF ALA-1034</scope>
</reference>
<reference key="17">
    <citation type="journal article" date="2011" name="Curr. Biol.">
        <title>Autophagy and lipid metabolism coordinately modulate life span in germline-less C. elegans.</title>
        <authorList>
            <person name="Lapierre L.R."/>
            <person name="Gelino S."/>
            <person name="Melendez A."/>
            <person name="Hansen M."/>
        </authorList>
    </citation>
    <scope>FUNCTION</scope>
    <scope>MUTAGENESIS OF ARG-974</scope>
</reference>
<reference key="18">
    <citation type="journal article" date="2012" name="Biochim. Biophys. Acta">
        <title>The Ras-ERK MAPK regulatory network controls dedifferentiation in Caenorhabditis elegans germline.</title>
        <authorList>
            <person name="Cha D.S."/>
            <person name="Datla U.S."/>
            <person name="Hollis S.E."/>
            <person name="Kimble J."/>
            <person name="Lee M.H."/>
        </authorList>
    </citation>
    <scope>MUTAGENESIS OF GLY-1043</scope>
</reference>
<reference key="19">
    <citation type="journal article" date="2012" name="Development">
        <title>S6K links cell fate, cell cycle and nutrient response in C. elegans germline stem/progenitor cells.</title>
        <authorList>
            <person name="Korta D.Z."/>
            <person name="Tuck S."/>
            <person name="Hubbard E.J."/>
        </authorList>
    </citation>
    <scope>FUNCTION</scope>
    <scope>DISRUPTION PHENOTYPE</scope>
    <scope>MUTAGENESIS OF GLY-529 AND ARG-974</scope>
</reference>
<reference key="20">
    <citation type="journal article" date="2013" name="Cell Rep.">
        <title>Germline signaling mediates the synergistically prolonged longevity produced by double mutations in daf-2 and rsks-1 in C. elegans.</title>
        <authorList>
            <person name="Chen D."/>
            <person name="Li P.W."/>
            <person name="Goldstein B.A."/>
            <person name="Cai W."/>
            <person name="Thomas E.L."/>
            <person name="Chen F."/>
            <person name="Hubbard A.E."/>
            <person name="Melov S."/>
            <person name="Kapahi P."/>
        </authorList>
    </citation>
    <scope>FUNCTION</scope>
    <scope>DISRUPTION PHENOTYPE</scope>
    <scope>MUTAGENESIS OF LEU-929</scope>
</reference>
<reference key="21">
    <citation type="journal article" date="2016" name="Nat. Commun.">
        <title>Small nucleoli are a cellular hallmark of longevity.</title>
        <authorList>
            <person name="Tiku V."/>
            <person name="Jain C."/>
            <person name="Raz Y."/>
            <person name="Nakamura S."/>
            <person name="Heestand B."/>
            <person name="Liu W."/>
            <person name="Spaeth M."/>
            <person name="Suchiman H.E.D."/>
            <person name="Mueller R.U."/>
            <person name="Slagboom P.E."/>
            <person name="Partridge L."/>
            <person name="Antebi A."/>
        </authorList>
    </citation>
    <scope>FUNCTION</scope>
    <scope>MUTAGENESIS OF ARG-974</scope>
</reference>
<reference key="22">
    <citation type="journal article" date="2020" name="PLoS Genet.">
        <title>GLP-1 Notch-LAG-1 CSL control of the germline stem cell fate is mediated by transcriptional targets lst-1 and sygl-1.</title>
        <authorList>
            <person name="Chen J."/>
            <person name="Mohammad A."/>
            <person name="Pazdernik N."/>
            <person name="Huang H."/>
            <person name="Bowman B."/>
            <person name="Tycksen E."/>
            <person name="Schedl T."/>
        </authorList>
    </citation>
    <scope>FUNCTION</scope>
</reference>
<dbReference type="EMBL" id="M25580">
    <property type="protein sequence ID" value="AAA28058.1"/>
    <property type="molecule type" value="Genomic_DNA"/>
</dbReference>
<dbReference type="EMBL" id="BX284603">
    <property type="protein sequence ID" value="CAA79620.1"/>
    <property type="molecule type" value="Genomic_DNA"/>
</dbReference>
<dbReference type="EMBL" id="Z29116">
    <property type="protein sequence ID" value="CAA79620.1"/>
    <property type="status" value="JOINED"/>
    <property type="molecule type" value="Genomic_DNA"/>
</dbReference>
<dbReference type="PIR" id="A32901">
    <property type="entry name" value="A32901"/>
</dbReference>
<dbReference type="RefSeq" id="NP_499014.1">
    <property type="nucleotide sequence ID" value="NM_066613.5"/>
</dbReference>
<dbReference type="SMR" id="P13508"/>
<dbReference type="BioGRID" id="41485">
    <property type="interactions" value="94"/>
</dbReference>
<dbReference type="DIP" id="DIP-26562N"/>
<dbReference type="ELM" id="P13508"/>
<dbReference type="FunCoup" id="P13508">
    <property type="interactions" value="959"/>
</dbReference>
<dbReference type="IntAct" id="P13508">
    <property type="interactions" value="13"/>
</dbReference>
<dbReference type="MINT" id="P13508"/>
<dbReference type="STRING" id="6239.F02A9.6.1"/>
<dbReference type="GlyCosmos" id="P13508">
    <property type="glycosylation" value="6 sites, No reported glycans"/>
</dbReference>
<dbReference type="PaxDb" id="6239-F02A9.6"/>
<dbReference type="EnsemblMetazoa" id="F02A9.6.1">
    <property type="protein sequence ID" value="F02A9.6.1"/>
    <property type="gene ID" value="WBGene00001609"/>
</dbReference>
<dbReference type="GeneID" id="176286"/>
<dbReference type="KEGG" id="cel:CELE_F02A9.6"/>
<dbReference type="UCSC" id="F02A9.6">
    <property type="organism name" value="c. elegans"/>
</dbReference>
<dbReference type="AGR" id="WB:WBGene00001609"/>
<dbReference type="CTD" id="176286"/>
<dbReference type="WormBase" id="F02A9.6">
    <property type="protein sequence ID" value="CE00237"/>
    <property type="gene ID" value="WBGene00001609"/>
    <property type="gene designation" value="glp-1"/>
</dbReference>
<dbReference type="eggNOG" id="KOG1217">
    <property type="taxonomic scope" value="Eukaryota"/>
</dbReference>
<dbReference type="HOGENOM" id="CLU_005264_0_0_1"/>
<dbReference type="InParanoid" id="P13508"/>
<dbReference type="OMA" id="GKCETFP"/>
<dbReference type="OrthoDB" id="283575at2759"/>
<dbReference type="PhylomeDB" id="P13508"/>
<dbReference type="SignaLink" id="P13508"/>
<dbReference type="PRO" id="PR:P13508"/>
<dbReference type="Proteomes" id="UP000001940">
    <property type="component" value="Chromosome III"/>
</dbReference>
<dbReference type="Bgee" id="WBGene00001609">
    <property type="expression patterns" value="Expressed in embryonic cell and 39 other cell types or tissues"/>
</dbReference>
<dbReference type="GO" id="GO:0030424">
    <property type="term" value="C:axon"/>
    <property type="evidence" value="ECO:0007669"/>
    <property type="project" value="UniProtKB-SubCell"/>
</dbReference>
<dbReference type="GO" id="GO:0005737">
    <property type="term" value="C:cytoplasm"/>
    <property type="evidence" value="ECO:0000314"/>
    <property type="project" value="WormBase"/>
</dbReference>
<dbReference type="GO" id="GO:0012505">
    <property type="term" value="C:endomembrane system"/>
    <property type="evidence" value="ECO:0000314"/>
    <property type="project" value="WormBase"/>
</dbReference>
<dbReference type="GO" id="GO:0016328">
    <property type="term" value="C:lateral plasma membrane"/>
    <property type="evidence" value="ECO:0000314"/>
    <property type="project" value="WormBase"/>
</dbReference>
<dbReference type="GO" id="GO:0005886">
    <property type="term" value="C:plasma membrane"/>
    <property type="evidence" value="ECO:0000314"/>
    <property type="project" value="WormBase"/>
</dbReference>
<dbReference type="GO" id="GO:0090575">
    <property type="term" value="C:RNA polymerase II transcription regulator complex"/>
    <property type="evidence" value="ECO:0000314"/>
    <property type="project" value="WormBase"/>
</dbReference>
<dbReference type="GO" id="GO:0005509">
    <property type="term" value="F:calcium ion binding"/>
    <property type="evidence" value="ECO:0007669"/>
    <property type="project" value="InterPro"/>
</dbReference>
<dbReference type="GO" id="GO:0061629">
    <property type="term" value="F:RNA polymerase II-specific DNA-binding transcription factor binding"/>
    <property type="evidence" value="ECO:0000353"/>
    <property type="project" value="WormBase"/>
</dbReference>
<dbReference type="GO" id="GO:0003713">
    <property type="term" value="F:transcription coactivator activity"/>
    <property type="evidence" value="ECO:0000314"/>
    <property type="project" value="WormBase"/>
</dbReference>
<dbReference type="GO" id="GO:0004888">
    <property type="term" value="F:transmembrane signaling receptor activity"/>
    <property type="evidence" value="ECO:0000250"/>
    <property type="project" value="WormBase"/>
</dbReference>
<dbReference type="GO" id="GO:0001708">
    <property type="term" value="P:cell fate specification"/>
    <property type="evidence" value="ECO:0000316"/>
    <property type="project" value="WormBase"/>
</dbReference>
<dbReference type="GO" id="GO:0007349">
    <property type="term" value="P:cellularization"/>
    <property type="evidence" value="ECO:0000315"/>
    <property type="project" value="UniProtKB"/>
</dbReference>
<dbReference type="GO" id="GO:0099636">
    <property type="term" value="P:cytoplasmic streaming"/>
    <property type="evidence" value="ECO:0000315"/>
    <property type="project" value="UniProtKB"/>
</dbReference>
<dbReference type="GO" id="GO:0009880">
    <property type="term" value="P:embryonic pattern specification"/>
    <property type="evidence" value="ECO:0000315"/>
    <property type="project" value="WormBase"/>
</dbReference>
<dbReference type="GO" id="GO:0043055">
    <property type="term" value="P:maintenance of dauer"/>
    <property type="evidence" value="ECO:0000316"/>
    <property type="project" value="WormBase"/>
</dbReference>
<dbReference type="GO" id="GO:2000737">
    <property type="term" value="P:negative regulation of stem cell differentiation"/>
    <property type="evidence" value="ECO:0000315"/>
    <property type="project" value="UniProtKB"/>
</dbReference>
<dbReference type="GO" id="GO:0002119">
    <property type="term" value="P:nematode larval development"/>
    <property type="evidence" value="ECO:0000316"/>
    <property type="project" value="WormBase"/>
</dbReference>
<dbReference type="GO" id="GO:0160096">
    <property type="term" value="P:nematode pharyngeal muscle development"/>
    <property type="evidence" value="ECO:0000315"/>
    <property type="project" value="WormBase"/>
</dbReference>
<dbReference type="GO" id="GO:0007219">
    <property type="term" value="P:Notch signaling pathway"/>
    <property type="evidence" value="ECO:0007669"/>
    <property type="project" value="UniProtKB-KW"/>
</dbReference>
<dbReference type="GO" id="GO:0001555">
    <property type="term" value="P:oocyte growth"/>
    <property type="evidence" value="ECO:0000315"/>
    <property type="project" value="UniProtKB"/>
</dbReference>
<dbReference type="GO" id="GO:0010628">
    <property type="term" value="P:positive regulation of gene expression"/>
    <property type="evidence" value="ECO:0000315"/>
    <property type="project" value="UniProtKB"/>
</dbReference>
<dbReference type="GO" id="GO:1905938">
    <property type="term" value="P:positive regulation of germ cell proliferation"/>
    <property type="evidence" value="ECO:0000315"/>
    <property type="project" value="UniProtKB"/>
</dbReference>
<dbReference type="GO" id="GO:2000648">
    <property type="term" value="P:positive regulation of stem cell proliferation"/>
    <property type="evidence" value="ECO:0000315"/>
    <property type="project" value="WormBase"/>
</dbReference>
<dbReference type="GO" id="GO:0045944">
    <property type="term" value="P:positive regulation of transcription by RNA polymerase II"/>
    <property type="evidence" value="ECO:0000314"/>
    <property type="project" value="WormBase"/>
</dbReference>
<dbReference type="GO" id="GO:0010608">
    <property type="term" value="P:post-transcriptional regulation of gene expression"/>
    <property type="evidence" value="ECO:0000315"/>
    <property type="project" value="UniProtKB"/>
</dbReference>
<dbReference type="GO" id="GO:0010468">
    <property type="term" value="P:regulation of gene expression"/>
    <property type="evidence" value="ECO:0000316"/>
    <property type="project" value="UniProtKB"/>
</dbReference>
<dbReference type="GO" id="GO:1905936">
    <property type="term" value="P:regulation of germ cell proliferation"/>
    <property type="evidence" value="ECO:0000316"/>
    <property type="project" value="UniProtKB"/>
</dbReference>
<dbReference type="GO" id="GO:0006357">
    <property type="term" value="P:regulation of transcription by RNA polymerase II"/>
    <property type="evidence" value="ECO:0000315"/>
    <property type="project" value="UniProtKB"/>
</dbReference>
<dbReference type="CDD" id="cd00054">
    <property type="entry name" value="EGF_CA"/>
    <property type="match status" value="5"/>
</dbReference>
<dbReference type="FunFam" id="2.10.25.10:FF:000779">
    <property type="entry name" value="Eyes shut homolog"/>
    <property type="match status" value="1"/>
</dbReference>
<dbReference type="FunFam" id="3.30.300.320:FF:000001">
    <property type="entry name" value="Neurogenic locus notch 1"/>
    <property type="match status" value="1"/>
</dbReference>
<dbReference type="Gene3D" id="3.30.300.320">
    <property type="match status" value="1"/>
</dbReference>
<dbReference type="Gene3D" id="3.30.70.3310">
    <property type="match status" value="1"/>
</dbReference>
<dbReference type="Gene3D" id="1.25.40.20">
    <property type="entry name" value="Ankyrin repeat-containing domain"/>
    <property type="match status" value="1"/>
</dbReference>
<dbReference type="Gene3D" id="2.10.25.10">
    <property type="entry name" value="Laminin"/>
    <property type="match status" value="9"/>
</dbReference>
<dbReference type="InterPro" id="IPR002110">
    <property type="entry name" value="Ankyrin_rpt"/>
</dbReference>
<dbReference type="InterPro" id="IPR036770">
    <property type="entry name" value="Ankyrin_rpt-contain_sf"/>
</dbReference>
<dbReference type="InterPro" id="IPR001881">
    <property type="entry name" value="EGF-like_Ca-bd_dom"/>
</dbReference>
<dbReference type="InterPro" id="IPR000742">
    <property type="entry name" value="EGF-like_dom"/>
</dbReference>
<dbReference type="InterPro" id="IPR000152">
    <property type="entry name" value="EGF-type_Asp/Asn_hydroxyl_site"/>
</dbReference>
<dbReference type="InterPro" id="IPR018097">
    <property type="entry name" value="EGF_Ca-bd_CS"/>
</dbReference>
<dbReference type="InterPro" id="IPR035993">
    <property type="entry name" value="Notch-like_dom_sf"/>
</dbReference>
<dbReference type="InterPro" id="IPR051355">
    <property type="entry name" value="Notch/Slit_guidance"/>
</dbReference>
<dbReference type="InterPro" id="IPR000800">
    <property type="entry name" value="Notch_dom"/>
</dbReference>
<dbReference type="InterPro" id="IPR010660">
    <property type="entry name" value="Notch_NOD_dom"/>
</dbReference>
<dbReference type="InterPro" id="IPR011656">
    <property type="entry name" value="Notch_NODP_dom"/>
</dbReference>
<dbReference type="PANTHER" id="PTHR45836:SF13">
    <property type="entry name" value="PROTEIN CRUMBS"/>
    <property type="match status" value="1"/>
</dbReference>
<dbReference type="PANTHER" id="PTHR45836">
    <property type="entry name" value="SLIT HOMOLOG"/>
    <property type="match status" value="1"/>
</dbReference>
<dbReference type="Pfam" id="PF00023">
    <property type="entry name" value="Ank"/>
    <property type="match status" value="1"/>
</dbReference>
<dbReference type="Pfam" id="PF12796">
    <property type="entry name" value="Ank_2"/>
    <property type="match status" value="2"/>
</dbReference>
<dbReference type="Pfam" id="PF00008">
    <property type="entry name" value="EGF"/>
    <property type="match status" value="1"/>
</dbReference>
<dbReference type="Pfam" id="PF06816">
    <property type="entry name" value="NOD"/>
    <property type="match status" value="1"/>
</dbReference>
<dbReference type="Pfam" id="PF07684">
    <property type="entry name" value="NODP"/>
    <property type="match status" value="1"/>
</dbReference>
<dbReference type="Pfam" id="PF00066">
    <property type="entry name" value="Notch"/>
    <property type="match status" value="3"/>
</dbReference>
<dbReference type="PRINTS" id="PR01452">
    <property type="entry name" value="LNOTCHREPEAT"/>
</dbReference>
<dbReference type="PRINTS" id="PR01983">
    <property type="entry name" value="NOTCH"/>
</dbReference>
<dbReference type="SMART" id="SM00248">
    <property type="entry name" value="ANK"/>
    <property type="match status" value="5"/>
</dbReference>
<dbReference type="SMART" id="SM00181">
    <property type="entry name" value="EGF"/>
    <property type="match status" value="11"/>
</dbReference>
<dbReference type="SMART" id="SM00179">
    <property type="entry name" value="EGF_CA"/>
    <property type="match status" value="6"/>
</dbReference>
<dbReference type="SMART" id="SM00004">
    <property type="entry name" value="NL"/>
    <property type="match status" value="3"/>
</dbReference>
<dbReference type="SMART" id="SM01338">
    <property type="entry name" value="NOD"/>
    <property type="match status" value="1"/>
</dbReference>
<dbReference type="SMART" id="SM01339">
    <property type="entry name" value="NODP"/>
    <property type="match status" value="1"/>
</dbReference>
<dbReference type="SUPFAM" id="SSF48403">
    <property type="entry name" value="Ankyrin repeat"/>
    <property type="match status" value="1"/>
</dbReference>
<dbReference type="SUPFAM" id="SSF57196">
    <property type="entry name" value="EGF/Laminin"/>
    <property type="match status" value="7"/>
</dbReference>
<dbReference type="SUPFAM" id="SSF90193">
    <property type="entry name" value="Notch domain"/>
    <property type="match status" value="3"/>
</dbReference>
<dbReference type="PROSITE" id="PS50297">
    <property type="entry name" value="ANK_REP_REGION"/>
    <property type="match status" value="1"/>
</dbReference>
<dbReference type="PROSITE" id="PS50088">
    <property type="entry name" value="ANK_REPEAT"/>
    <property type="match status" value="3"/>
</dbReference>
<dbReference type="PROSITE" id="PS00010">
    <property type="entry name" value="ASX_HYDROXYL"/>
    <property type="match status" value="2"/>
</dbReference>
<dbReference type="PROSITE" id="PS00022">
    <property type="entry name" value="EGF_1"/>
    <property type="match status" value="10"/>
</dbReference>
<dbReference type="PROSITE" id="PS01186">
    <property type="entry name" value="EGF_2"/>
    <property type="match status" value="8"/>
</dbReference>
<dbReference type="PROSITE" id="PS50026">
    <property type="entry name" value="EGF_3"/>
    <property type="match status" value="10"/>
</dbReference>
<dbReference type="PROSITE" id="PS01187">
    <property type="entry name" value="EGF_CA"/>
    <property type="match status" value="1"/>
</dbReference>
<dbReference type="PROSITE" id="PS50258">
    <property type="entry name" value="LNR"/>
    <property type="match status" value="3"/>
</dbReference>
<keyword id="KW-0010">Activator</keyword>
<keyword id="KW-0040">ANK repeat</keyword>
<keyword id="KW-1003">Cell membrane</keyword>
<keyword id="KW-0966">Cell projection</keyword>
<keyword id="KW-0217">Developmental protein</keyword>
<keyword id="KW-0221">Differentiation</keyword>
<keyword id="KW-1015">Disulfide bond</keyword>
<keyword id="KW-0245">EGF-like domain</keyword>
<keyword id="KW-0325">Glycoprotein</keyword>
<keyword id="KW-0472">Membrane</keyword>
<keyword id="KW-0914">Notch signaling pathway</keyword>
<keyword id="KW-0539">Nucleus</keyword>
<keyword id="KW-1185">Reference proteome</keyword>
<keyword id="KW-0677">Repeat</keyword>
<keyword id="KW-0732">Signal</keyword>
<keyword id="KW-0804">Transcription</keyword>
<keyword id="KW-0805">Transcription regulation</keyword>
<keyword id="KW-0812">Transmembrane</keyword>
<keyword id="KW-1133">Transmembrane helix</keyword>
<protein>
    <recommendedName>
        <fullName>Protein glp-1</fullName>
    </recommendedName>
    <component>
        <recommendedName>
            <fullName evidence="26">glp-1/Notch intracellular domain</fullName>
        </recommendedName>
    </component>
</protein>
<proteinExistence type="evidence at protein level"/>
<evidence type="ECO:0000250" key="1">
    <source>
        <dbReference type="UniProtKB" id="P07207"/>
    </source>
</evidence>
<evidence type="ECO:0000255" key="2"/>
<evidence type="ECO:0000255" key="3">
    <source>
        <dbReference type="PROSITE-ProRule" id="PRU00023"/>
    </source>
</evidence>
<evidence type="ECO:0000255" key="4">
    <source>
        <dbReference type="PROSITE-ProRule" id="PRU00076"/>
    </source>
</evidence>
<evidence type="ECO:0000255" key="5">
    <source>
        <dbReference type="PROSITE-ProRule" id="PRU00525"/>
    </source>
</evidence>
<evidence type="ECO:0000256" key="6">
    <source>
        <dbReference type="SAM" id="MobiDB-lite"/>
    </source>
</evidence>
<evidence type="ECO:0000269" key="7">
    <source>
    </source>
</evidence>
<evidence type="ECO:0000269" key="8">
    <source>
    </source>
</evidence>
<evidence type="ECO:0000269" key="9">
    <source>
    </source>
</evidence>
<evidence type="ECO:0000269" key="10">
    <source>
    </source>
</evidence>
<evidence type="ECO:0000269" key="11">
    <source>
    </source>
</evidence>
<evidence type="ECO:0000269" key="12">
    <source>
    </source>
</evidence>
<evidence type="ECO:0000269" key="13">
    <source>
    </source>
</evidence>
<evidence type="ECO:0000269" key="14">
    <source>
    </source>
</evidence>
<evidence type="ECO:0000269" key="15">
    <source>
    </source>
</evidence>
<evidence type="ECO:0000269" key="16">
    <source>
    </source>
</evidence>
<evidence type="ECO:0000269" key="17">
    <source>
    </source>
</evidence>
<evidence type="ECO:0000269" key="18">
    <source>
    </source>
</evidence>
<evidence type="ECO:0000269" key="19">
    <source>
    </source>
</evidence>
<evidence type="ECO:0000269" key="20">
    <source>
    </source>
</evidence>
<evidence type="ECO:0000269" key="21">
    <source>
    </source>
</evidence>
<evidence type="ECO:0000269" key="22">
    <source>
    </source>
</evidence>
<evidence type="ECO:0000269" key="23">
    <source>
    </source>
</evidence>
<evidence type="ECO:0000303" key="24">
    <source>
    </source>
</evidence>
<evidence type="ECO:0000305" key="25"/>
<evidence type="ECO:0000305" key="26">
    <source>
    </source>
</evidence>
<evidence type="ECO:0000312" key="27">
    <source>
        <dbReference type="WormBase" id="F02A9.6"/>
    </source>
</evidence>